<protein>
    <recommendedName>
        <fullName>Halotolerance protein HAL1</fullName>
    </recommendedName>
</protein>
<keyword id="KW-0963">Cytoplasm</keyword>
<keyword id="KW-0597">Phosphoprotein</keyword>
<keyword id="KW-1185">Reference proteome</keyword>
<keyword id="KW-0346">Stress response</keyword>
<dbReference type="EMBL" id="U31900">
    <property type="protein sequence ID" value="AAA97584.1"/>
    <property type="molecule type" value="Genomic_DNA"/>
</dbReference>
<dbReference type="EMBL" id="X67559">
    <property type="protein sequence ID" value="CAA47858.1"/>
    <property type="molecule type" value="Genomic_DNA"/>
</dbReference>
<dbReference type="EMBL" id="Z48951">
    <property type="protein sequence ID" value="CAA88783.1"/>
    <property type="molecule type" value="Genomic_DNA"/>
</dbReference>
<dbReference type="EMBL" id="Z71255">
    <property type="protein sequence ID" value="CAA95045.1"/>
    <property type="molecule type" value="Genomic_DNA"/>
</dbReference>
<dbReference type="EMBL" id="BK006949">
    <property type="protein sequence ID" value="DAA11432.1"/>
    <property type="molecule type" value="Genomic_DNA"/>
</dbReference>
<dbReference type="PIR" id="S23561">
    <property type="entry name" value="S23561"/>
</dbReference>
<dbReference type="RefSeq" id="NP_015330.1">
    <property type="nucleotide sequence ID" value="NM_001184102.1"/>
</dbReference>
<dbReference type="BioGRID" id="36182">
    <property type="interactions" value="44"/>
</dbReference>
<dbReference type="FunCoup" id="Q01766">
    <property type="interactions" value="59"/>
</dbReference>
<dbReference type="IntAct" id="Q01766">
    <property type="interactions" value="2"/>
</dbReference>
<dbReference type="MINT" id="Q01766"/>
<dbReference type="STRING" id="4932.YPR005C"/>
<dbReference type="iPTMnet" id="Q01766"/>
<dbReference type="PaxDb" id="4932-YPR005C"/>
<dbReference type="PeptideAtlas" id="Q01766"/>
<dbReference type="EnsemblFungi" id="YPR005C_mRNA">
    <property type="protein sequence ID" value="YPR005C"/>
    <property type="gene ID" value="YPR005C"/>
</dbReference>
<dbReference type="GeneID" id="856113"/>
<dbReference type="KEGG" id="sce:YPR005C"/>
<dbReference type="AGR" id="SGD:S000006209"/>
<dbReference type="SGD" id="S000006209">
    <property type="gene designation" value="HAL1"/>
</dbReference>
<dbReference type="VEuPathDB" id="FungiDB:YPR005C"/>
<dbReference type="HOGENOM" id="CLU_947154_0_0_1"/>
<dbReference type="InParanoid" id="Q01766"/>
<dbReference type="OMA" id="ENNCCKF"/>
<dbReference type="OrthoDB" id="4038243at2759"/>
<dbReference type="BioCyc" id="YEAST:G3O-34167-MONOMER"/>
<dbReference type="BioGRID-ORCS" id="856113">
    <property type="hits" value="0 hits in 10 CRISPR screens"/>
</dbReference>
<dbReference type="PRO" id="PR:Q01766"/>
<dbReference type="Proteomes" id="UP000002311">
    <property type="component" value="Chromosome XVI"/>
</dbReference>
<dbReference type="RNAct" id="Q01766">
    <property type="molecule type" value="protein"/>
</dbReference>
<dbReference type="GO" id="GO:0005737">
    <property type="term" value="C:cytoplasm"/>
    <property type="evidence" value="ECO:0000314"/>
    <property type="project" value="SGD"/>
</dbReference>
<dbReference type="GO" id="GO:0045944">
    <property type="term" value="P:positive regulation of transcription by RNA polymerase II"/>
    <property type="evidence" value="ECO:0000315"/>
    <property type="project" value="SGD"/>
</dbReference>
<dbReference type="GO" id="GO:0009651">
    <property type="term" value="P:response to salt stress"/>
    <property type="evidence" value="ECO:0000315"/>
    <property type="project" value="SGD"/>
</dbReference>
<gene>
    <name type="primary">HAL1</name>
    <name type="ordered locus">YPR005C</name>
    <name type="ORF">YP9723.05C</name>
</gene>
<feature type="chain" id="PRO_0000083893" description="Halotolerance protein HAL1">
    <location>
        <begin position="1"/>
        <end position="294"/>
    </location>
</feature>
<feature type="region of interest" description="Disordered" evidence="1">
    <location>
        <begin position="115"/>
        <end position="153"/>
    </location>
</feature>
<feature type="compositionally biased region" description="Polar residues" evidence="1">
    <location>
        <begin position="125"/>
        <end position="153"/>
    </location>
</feature>
<feature type="modified residue" description="Phosphoserine" evidence="2">
    <location>
        <position position="266"/>
    </location>
</feature>
<reference key="1">
    <citation type="journal article" date="1992" name="EMBO J.">
        <title>A novel and conserved salt-induced protein is an important determinant of salt tolerance in yeast.</title>
        <authorList>
            <person name="Gaxiola R."/>
            <person name="de Larrinoa I.F."/>
            <person name="Villalba J.M."/>
            <person name="Serrano R."/>
        </authorList>
    </citation>
    <scope>NUCLEOTIDE SEQUENCE [GENOMIC DNA]</scope>
    <source>
        <strain>DBY939</strain>
    </source>
</reference>
<reference key="2">
    <citation type="journal article" date="1997" name="Nature">
        <title>The nucleotide sequence of Saccharomyces cerevisiae chromosome XVI.</title>
        <authorList>
            <person name="Bussey H."/>
            <person name="Storms R.K."/>
            <person name="Ahmed A."/>
            <person name="Albermann K."/>
            <person name="Allen E."/>
            <person name="Ansorge W."/>
            <person name="Araujo R."/>
            <person name="Aparicio A."/>
            <person name="Barrell B.G."/>
            <person name="Badcock K."/>
            <person name="Benes V."/>
            <person name="Botstein D."/>
            <person name="Bowman S."/>
            <person name="Brueckner M."/>
            <person name="Carpenter J."/>
            <person name="Cherry J.M."/>
            <person name="Chung E."/>
            <person name="Churcher C.M."/>
            <person name="Coster F."/>
            <person name="Davis K."/>
            <person name="Davis R.W."/>
            <person name="Dietrich F.S."/>
            <person name="Delius H."/>
            <person name="DiPaolo T."/>
            <person name="Dubois E."/>
            <person name="Duesterhoeft A."/>
            <person name="Duncan M."/>
            <person name="Floeth M."/>
            <person name="Fortin N."/>
            <person name="Friesen J.D."/>
            <person name="Fritz C."/>
            <person name="Goffeau A."/>
            <person name="Hall J."/>
            <person name="Hebling U."/>
            <person name="Heumann K."/>
            <person name="Hilbert H."/>
            <person name="Hillier L.W."/>
            <person name="Hunicke-Smith S."/>
            <person name="Hyman R.W."/>
            <person name="Johnston M."/>
            <person name="Kalman S."/>
            <person name="Kleine K."/>
            <person name="Komp C."/>
            <person name="Kurdi O."/>
            <person name="Lashkari D."/>
            <person name="Lew H."/>
            <person name="Lin A."/>
            <person name="Lin D."/>
            <person name="Louis E.J."/>
            <person name="Marathe R."/>
            <person name="Messenguy F."/>
            <person name="Mewes H.-W."/>
            <person name="Mirtipati S."/>
            <person name="Moestl D."/>
            <person name="Mueller-Auer S."/>
            <person name="Namath A."/>
            <person name="Nentwich U."/>
            <person name="Oefner P."/>
            <person name="Pearson D."/>
            <person name="Petel F.X."/>
            <person name="Pohl T.M."/>
            <person name="Purnelle B."/>
            <person name="Rajandream M.A."/>
            <person name="Rechmann S."/>
            <person name="Rieger M."/>
            <person name="Riles L."/>
            <person name="Roberts D."/>
            <person name="Schaefer M."/>
            <person name="Scharfe M."/>
            <person name="Scherens B."/>
            <person name="Schramm S."/>
            <person name="Schroeder M."/>
            <person name="Sdicu A.-M."/>
            <person name="Tettelin H."/>
            <person name="Urrestarazu L.A."/>
            <person name="Ushinsky S."/>
            <person name="Vierendeels F."/>
            <person name="Vissers S."/>
            <person name="Voss H."/>
            <person name="Walsh S.V."/>
            <person name="Wambutt R."/>
            <person name="Wang Y."/>
            <person name="Wedler E."/>
            <person name="Wedler H."/>
            <person name="Winnett E."/>
            <person name="Zhong W.-W."/>
            <person name="Zollner A."/>
            <person name="Vo D.H."/>
            <person name="Hani J."/>
        </authorList>
    </citation>
    <scope>NUCLEOTIDE SEQUENCE [LARGE SCALE GENOMIC DNA]</scope>
    <source>
        <strain>ATCC 204508 / S288c</strain>
    </source>
</reference>
<reference key="3">
    <citation type="journal article" date="2014" name="G3 (Bethesda)">
        <title>The reference genome sequence of Saccharomyces cerevisiae: Then and now.</title>
        <authorList>
            <person name="Engel S.R."/>
            <person name="Dietrich F.S."/>
            <person name="Fisk D.G."/>
            <person name="Binkley G."/>
            <person name="Balakrishnan R."/>
            <person name="Costanzo M.C."/>
            <person name="Dwight S.S."/>
            <person name="Hitz B.C."/>
            <person name="Karra K."/>
            <person name="Nash R.S."/>
            <person name="Weng S."/>
            <person name="Wong E.D."/>
            <person name="Lloyd P."/>
            <person name="Skrzypek M.S."/>
            <person name="Miyasato S.R."/>
            <person name="Simison M."/>
            <person name="Cherry J.M."/>
        </authorList>
    </citation>
    <scope>GENOME REANNOTATION</scope>
    <source>
        <strain>ATCC 204508 / S288c</strain>
    </source>
</reference>
<reference key="4">
    <citation type="journal article" date="2009" name="Science">
        <title>Global analysis of Cdk1 substrate phosphorylation sites provides insights into evolution.</title>
        <authorList>
            <person name="Holt L.J."/>
            <person name="Tuch B.B."/>
            <person name="Villen J."/>
            <person name="Johnson A.D."/>
            <person name="Gygi S.P."/>
            <person name="Morgan D.O."/>
        </authorList>
    </citation>
    <scope>PHOSPHORYLATION [LARGE SCALE ANALYSIS] AT SER-266</scope>
    <scope>IDENTIFICATION BY MASS SPECTROMETRY [LARGE SCALE ANALYSIS]</scope>
</reference>
<accession>Q01766</accession>
<accession>D6W416</accession>
<evidence type="ECO:0000256" key="1">
    <source>
        <dbReference type="SAM" id="MobiDB-lite"/>
    </source>
</evidence>
<evidence type="ECO:0007744" key="2">
    <source>
    </source>
</evidence>
<sequence>MHFKDLGLHDYTLKNLMYENNCCKFYDAVDENNISYVLKFVPSDVTSEGDTFPFVDRFQVKEGVFLVYSSNDFGKEGTDYFTYTGSGGNEVHISGTSSEAGIKPQFIETCHPKHLKRGTKEQEDINSSTSKKSAVINNFSGEKTPNPRPQSSNISERETYVGILNVKCKNKNSSKIRSEKLVSSVIETKHTPGLASILSKEGTTYPNNADGKHISIVNPSSKIYHSSHKQIVKTPIPKSGLSPIERCPFNGQNIKCYSPRPLDHESPQRDFNNNFQLRILKSSVLQRRQSTQNS</sequence>
<proteinExistence type="evidence at protein level"/>
<organism>
    <name type="scientific">Saccharomyces cerevisiae (strain ATCC 204508 / S288c)</name>
    <name type="common">Baker's yeast</name>
    <dbReference type="NCBI Taxonomy" id="559292"/>
    <lineage>
        <taxon>Eukaryota</taxon>
        <taxon>Fungi</taxon>
        <taxon>Dikarya</taxon>
        <taxon>Ascomycota</taxon>
        <taxon>Saccharomycotina</taxon>
        <taxon>Saccharomycetes</taxon>
        <taxon>Saccharomycetales</taxon>
        <taxon>Saccharomycetaceae</taxon>
        <taxon>Saccharomyces</taxon>
    </lineage>
</organism>
<name>HAL1_YEAST</name>
<comment type="function">
    <text>Involved in salt tolerance.</text>
</comment>
<comment type="subcellular location">
    <subcellularLocation>
        <location>Cytoplasm</location>
    </subcellularLocation>
</comment>
<comment type="induction">
    <text>By salt stress.</text>
</comment>